<gene>
    <name type="primary">rps10</name>
    <name type="synonym">rpsJ</name>
</gene>
<reference key="1">
    <citation type="journal article" date="1990" name="FEBS Lett.">
        <title>The petFI gene encoding ferredoxin I is located close to the str operon on the cyanelle genome of Cyanophora paradoxa.</title>
        <authorList>
            <person name="Neumann-Spallart C."/>
            <person name="Brandtner M."/>
            <person name="Kraus M."/>
            <person name="Jakowitch J."/>
            <person name="Bayer M.G."/>
            <person name="Maier T.L."/>
            <person name="Schenk H.E.A."/>
            <person name="Loeffelhardt W."/>
        </authorList>
    </citation>
    <scope>NUCLEOTIDE SEQUENCE [GENOMIC DNA]</scope>
    <source>
        <strain>UTEX LB 555 / Pringsheim</strain>
    </source>
</reference>
<reference key="2">
    <citation type="journal article" date="1991" name="Gene">
        <title>Ferredoxin and ribosomal protein S10 are encoded on the cyanelle genome of Cyanophora paradoxa.</title>
        <authorList>
            <person name="Bryant D.A."/>
            <person name="Schluchter W.M."/>
            <person name="Stirewalt V.L."/>
        </authorList>
    </citation>
    <scope>NUCLEOTIDE SEQUENCE [GENOMIC DNA]</scope>
    <source>
        <strain>UTEX LB 555 / Pringsheim</strain>
    </source>
</reference>
<reference key="3">
    <citation type="journal article" date="1995" name="Plant Mol. Biol. Rep.">
        <title>Nucleotide sequence of the cyanelle DNA from Cyanophora paradoxa.</title>
        <authorList>
            <person name="Stirewalt V.L."/>
            <person name="Michalowski C.B."/>
            <person name="Loeffelhardt W."/>
            <person name="Bohnert H.J."/>
            <person name="Bryant D.A."/>
        </authorList>
    </citation>
    <scope>NUCLEOTIDE SEQUENCE [LARGE SCALE GENOMIC DNA]</scope>
    <source>
        <strain>UTEX LB 555 / Pringsheim</strain>
    </source>
</reference>
<reference key="4">
    <citation type="book" date="1997" name="Eukaryotism and symbiosis">
        <title>The complete sequence of the cyanelle genome of Cyanophora paradoxa: the genetic complexity of a primitive plastid.</title>
        <editorList>
            <person name="Schenk H.E.A."/>
            <person name="Herrmann R."/>
            <person name="Jeon K.W."/>
            <person name="Mueller N.E."/>
            <person name="Schwemmler W."/>
        </editorList>
        <authorList>
            <person name="Loeffelhardt W."/>
            <person name="Stirewalt V.L."/>
            <person name="Michalowski C.B."/>
            <person name="Annarella M."/>
            <person name="Farley J.Y."/>
            <person name="Schluchter W.M."/>
            <person name="Chung S."/>
            <person name="Newmann-Spallart C."/>
            <person name="Steiner J.M."/>
            <person name="Jakowitsch J."/>
            <person name="Bohnert H.J."/>
            <person name="Bryant D.A."/>
        </authorList>
    </citation>
    <scope>NUCLEOTIDE SEQUENCE [LARGE SCALE GENOMIC DNA]</scope>
    <source>
        <strain>UTEX LB 555 / Pringsheim</strain>
    </source>
</reference>
<accession>P17009</accession>
<protein>
    <recommendedName>
        <fullName evidence="2">Small ribosomal subunit protein uS10c</fullName>
    </recommendedName>
    <alternativeName>
        <fullName>Cyanelle 30S ribosomal protein S10</fullName>
    </alternativeName>
</protein>
<comment type="function">
    <text evidence="1">Involved in the binding of tRNA to the ribosomes.</text>
</comment>
<comment type="subunit">
    <text evidence="1">Part of the 30S ribosomal subunit.</text>
</comment>
<comment type="subcellular location">
    <subcellularLocation>
        <location>Plastid</location>
        <location>Cyanelle</location>
    </subcellularLocation>
</comment>
<comment type="similarity">
    <text evidence="2">Belongs to the universal ribosomal protein uS10 family.</text>
</comment>
<proteinExistence type="inferred from homology"/>
<geneLocation type="cyanelle"/>
<organism>
    <name type="scientific">Cyanophora paradoxa</name>
    <dbReference type="NCBI Taxonomy" id="2762"/>
    <lineage>
        <taxon>Eukaryota</taxon>
        <taxon>Glaucocystophyceae</taxon>
        <taxon>Cyanophoraceae</taxon>
        <taxon>Cyanophora</taxon>
    </lineage>
</organism>
<name>RR10_CYAPA</name>
<dbReference type="EMBL" id="X52143">
    <property type="protein sequence ID" value="CAA36388.1"/>
    <property type="molecule type" value="Genomic_DNA"/>
</dbReference>
<dbReference type="EMBL" id="M35206">
    <property type="protein sequence ID" value="AAA31700.1"/>
    <property type="molecule type" value="Genomic_DNA"/>
</dbReference>
<dbReference type="EMBL" id="U30821">
    <property type="protein sequence ID" value="AAA81237.1"/>
    <property type="molecule type" value="Genomic_DNA"/>
</dbReference>
<dbReference type="PIR" id="S10428">
    <property type="entry name" value="R3KT10"/>
</dbReference>
<dbReference type="RefSeq" id="NP_043206.1">
    <property type="nucleotide sequence ID" value="NC_001675.1"/>
</dbReference>
<dbReference type="SMR" id="P17009"/>
<dbReference type="GeneID" id="801520"/>
<dbReference type="GO" id="GO:0009842">
    <property type="term" value="C:cyanelle"/>
    <property type="evidence" value="ECO:0007669"/>
    <property type="project" value="UniProtKB-SubCell"/>
</dbReference>
<dbReference type="GO" id="GO:1990904">
    <property type="term" value="C:ribonucleoprotein complex"/>
    <property type="evidence" value="ECO:0007669"/>
    <property type="project" value="UniProtKB-KW"/>
</dbReference>
<dbReference type="GO" id="GO:0005840">
    <property type="term" value="C:ribosome"/>
    <property type="evidence" value="ECO:0007669"/>
    <property type="project" value="UniProtKB-KW"/>
</dbReference>
<dbReference type="GO" id="GO:0003723">
    <property type="term" value="F:RNA binding"/>
    <property type="evidence" value="ECO:0007669"/>
    <property type="project" value="InterPro"/>
</dbReference>
<dbReference type="GO" id="GO:0003735">
    <property type="term" value="F:structural constituent of ribosome"/>
    <property type="evidence" value="ECO:0007669"/>
    <property type="project" value="InterPro"/>
</dbReference>
<dbReference type="GO" id="GO:0006412">
    <property type="term" value="P:translation"/>
    <property type="evidence" value="ECO:0007669"/>
    <property type="project" value="InterPro"/>
</dbReference>
<dbReference type="FunFam" id="3.30.70.600:FF:000003">
    <property type="entry name" value="30S ribosomal protein S10"/>
    <property type="match status" value="1"/>
</dbReference>
<dbReference type="Gene3D" id="3.30.70.600">
    <property type="entry name" value="Ribosomal protein S10 domain"/>
    <property type="match status" value="1"/>
</dbReference>
<dbReference type="HAMAP" id="MF_00508">
    <property type="entry name" value="Ribosomal_uS10"/>
    <property type="match status" value="1"/>
</dbReference>
<dbReference type="InterPro" id="IPR001848">
    <property type="entry name" value="Ribosomal_uS10"/>
</dbReference>
<dbReference type="InterPro" id="IPR018268">
    <property type="entry name" value="Ribosomal_uS10_CS"/>
</dbReference>
<dbReference type="InterPro" id="IPR027486">
    <property type="entry name" value="Ribosomal_uS10_dom"/>
</dbReference>
<dbReference type="InterPro" id="IPR036838">
    <property type="entry name" value="Ribosomal_uS10_dom_sf"/>
</dbReference>
<dbReference type="NCBIfam" id="NF001861">
    <property type="entry name" value="PRK00596.1"/>
    <property type="match status" value="1"/>
</dbReference>
<dbReference type="NCBIfam" id="TIGR01049">
    <property type="entry name" value="rpsJ_bact"/>
    <property type="match status" value="1"/>
</dbReference>
<dbReference type="PANTHER" id="PTHR11700">
    <property type="entry name" value="30S RIBOSOMAL PROTEIN S10 FAMILY MEMBER"/>
    <property type="match status" value="1"/>
</dbReference>
<dbReference type="Pfam" id="PF00338">
    <property type="entry name" value="Ribosomal_S10"/>
    <property type="match status" value="1"/>
</dbReference>
<dbReference type="PRINTS" id="PR00971">
    <property type="entry name" value="RIBOSOMALS10"/>
</dbReference>
<dbReference type="SMART" id="SM01403">
    <property type="entry name" value="Ribosomal_S10"/>
    <property type="match status" value="1"/>
</dbReference>
<dbReference type="SUPFAM" id="SSF54999">
    <property type="entry name" value="Ribosomal protein S10"/>
    <property type="match status" value="1"/>
</dbReference>
<dbReference type="PROSITE" id="PS00361">
    <property type="entry name" value="RIBOSOMAL_S10"/>
    <property type="match status" value="1"/>
</dbReference>
<sequence length="105" mass="11968">MASNQQLKIRIQLRSYDSSLLENSCEQIIEAAKRTDATAVGPIPLPTKKKIYCVLRSPHVDKDSREHFEIRVHRRIIDLYLPSSKTIDTLTRLDLPAGVDVEVKL</sequence>
<evidence type="ECO:0000250" key="1"/>
<evidence type="ECO:0000305" key="2"/>
<feature type="chain" id="PRO_0000146664" description="Small ribosomal subunit protein uS10c">
    <location>
        <begin position="1"/>
        <end position="105"/>
    </location>
</feature>
<keyword id="KW-0194">Cyanelle</keyword>
<keyword id="KW-0934">Plastid</keyword>
<keyword id="KW-0687">Ribonucleoprotein</keyword>
<keyword id="KW-0689">Ribosomal protein</keyword>